<proteinExistence type="inferred from homology"/>
<feature type="chain" id="PRO_0000266664" description="Small ribosomal subunit protein bS21">
    <location>
        <begin position="1"/>
        <end position="58"/>
    </location>
</feature>
<feature type="region of interest" description="Disordered" evidence="2">
    <location>
        <begin position="27"/>
        <end position="58"/>
    </location>
</feature>
<feature type="compositionally biased region" description="Basic and acidic residues" evidence="2">
    <location>
        <begin position="31"/>
        <end position="42"/>
    </location>
</feature>
<feature type="compositionally biased region" description="Basic residues" evidence="2">
    <location>
        <begin position="43"/>
        <end position="58"/>
    </location>
</feature>
<organism>
    <name type="scientific">Desulfitobacterium hafniense (strain Y51)</name>
    <dbReference type="NCBI Taxonomy" id="138119"/>
    <lineage>
        <taxon>Bacteria</taxon>
        <taxon>Bacillati</taxon>
        <taxon>Bacillota</taxon>
        <taxon>Clostridia</taxon>
        <taxon>Eubacteriales</taxon>
        <taxon>Desulfitobacteriaceae</taxon>
        <taxon>Desulfitobacterium</taxon>
    </lineage>
</organism>
<name>RS21_DESHY</name>
<accession>Q24ST0</accession>
<comment type="similarity">
    <text evidence="1">Belongs to the bacterial ribosomal protein bS21 family.</text>
</comment>
<evidence type="ECO:0000255" key="1">
    <source>
        <dbReference type="HAMAP-Rule" id="MF_00358"/>
    </source>
</evidence>
<evidence type="ECO:0000256" key="2">
    <source>
        <dbReference type="SAM" id="MobiDB-lite"/>
    </source>
</evidence>
<evidence type="ECO:0000305" key="3"/>
<keyword id="KW-1185">Reference proteome</keyword>
<keyword id="KW-0687">Ribonucleoprotein</keyword>
<keyword id="KW-0689">Ribosomal protein</keyword>
<dbReference type="EMBL" id="AP008230">
    <property type="protein sequence ID" value="BAE84912.1"/>
    <property type="molecule type" value="Genomic_DNA"/>
</dbReference>
<dbReference type="RefSeq" id="WP_005816464.1">
    <property type="nucleotide sequence ID" value="NC_007907.1"/>
</dbReference>
<dbReference type="SMR" id="Q24ST0"/>
<dbReference type="STRING" id="138119.DSY3123"/>
<dbReference type="KEGG" id="dsy:DSY3123"/>
<dbReference type="eggNOG" id="COG0828">
    <property type="taxonomic scope" value="Bacteria"/>
</dbReference>
<dbReference type="HOGENOM" id="CLU_159258_1_2_9"/>
<dbReference type="Proteomes" id="UP000001946">
    <property type="component" value="Chromosome"/>
</dbReference>
<dbReference type="GO" id="GO:1990904">
    <property type="term" value="C:ribonucleoprotein complex"/>
    <property type="evidence" value="ECO:0007669"/>
    <property type="project" value="UniProtKB-KW"/>
</dbReference>
<dbReference type="GO" id="GO:0005840">
    <property type="term" value="C:ribosome"/>
    <property type="evidence" value="ECO:0007669"/>
    <property type="project" value="UniProtKB-KW"/>
</dbReference>
<dbReference type="GO" id="GO:0003735">
    <property type="term" value="F:structural constituent of ribosome"/>
    <property type="evidence" value="ECO:0007669"/>
    <property type="project" value="InterPro"/>
</dbReference>
<dbReference type="GO" id="GO:0006412">
    <property type="term" value="P:translation"/>
    <property type="evidence" value="ECO:0007669"/>
    <property type="project" value="UniProtKB-UniRule"/>
</dbReference>
<dbReference type="Gene3D" id="1.20.5.1150">
    <property type="entry name" value="Ribosomal protein S8"/>
    <property type="match status" value="1"/>
</dbReference>
<dbReference type="HAMAP" id="MF_00358">
    <property type="entry name" value="Ribosomal_bS21"/>
    <property type="match status" value="1"/>
</dbReference>
<dbReference type="InterPro" id="IPR001911">
    <property type="entry name" value="Ribosomal_bS21"/>
</dbReference>
<dbReference type="InterPro" id="IPR018278">
    <property type="entry name" value="Ribosomal_bS21_CS"/>
</dbReference>
<dbReference type="InterPro" id="IPR038380">
    <property type="entry name" value="Ribosomal_bS21_sf"/>
</dbReference>
<dbReference type="NCBIfam" id="TIGR00030">
    <property type="entry name" value="S21p"/>
    <property type="match status" value="1"/>
</dbReference>
<dbReference type="PANTHER" id="PTHR21109">
    <property type="entry name" value="MITOCHONDRIAL 28S RIBOSOMAL PROTEIN S21"/>
    <property type="match status" value="1"/>
</dbReference>
<dbReference type="PANTHER" id="PTHR21109:SF22">
    <property type="entry name" value="SMALL RIBOSOMAL SUBUNIT PROTEIN BS21"/>
    <property type="match status" value="1"/>
</dbReference>
<dbReference type="Pfam" id="PF01165">
    <property type="entry name" value="Ribosomal_S21"/>
    <property type="match status" value="1"/>
</dbReference>
<dbReference type="PRINTS" id="PR00976">
    <property type="entry name" value="RIBOSOMALS21"/>
</dbReference>
<dbReference type="PROSITE" id="PS01181">
    <property type="entry name" value="RIBOSOMAL_S21"/>
    <property type="match status" value="1"/>
</dbReference>
<reference key="1">
    <citation type="journal article" date="2006" name="J. Bacteriol.">
        <title>Complete genome sequence of the dehalorespiring bacterium Desulfitobacterium hafniense Y51 and comparison with Dehalococcoides ethenogenes 195.</title>
        <authorList>
            <person name="Nonaka H."/>
            <person name="Keresztes G."/>
            <person name="Shinoda Y."/>
            <person name="Ikenaga Y."/>
            <person name="Abe M."/>
            <person name="Naito K."/>
            <person name="Inatomi K."/>
            <person name="Furukawa K."/>
            <person name="Inui M."/>
            <person name="Yukawa H."/>
        </authorList>
    </citation>
    <scope>NUCLEOTIDE SEQUENCE [LARGE SCALE GENOMIC DNA]</scope>
    <source>
        <strain>Y51</strain>
    </source>
</reference>
<protein>
    <recommendedName>
        <fullName evidence="1">Small ribosomal subunit protein bS21</fullName>
    </recommendedName>
    <alternativeName>
        <fullName evidence="3">30S ribosomal protein S21</fullName>
    </alternativeName>
</protein>
<gene>
    <name evidence="1" type="primary">rpsU</name>
    <name type="ordered locus">DSY3123</name>
</gene>
<sequence>MSEIKVGKNESLDSALRRFKRTCQRAGVLSEARKHEHYEKPSVKRKKKSEAARKRKFK</sequence>